<keyword id="KW-0067">ATP-binding</keyword>
<keyword id="KW-0143">Chaperone</keyword>
<keyword id="KW-0479">Metal-binding</keyword>
<keyword id="KW-0547">Nucleotide-binding</keyword>
<keyword id="KW-0862">Zinc</keyword>
<proteinExistence type="inferred from homology"/>
<gene>
    <name evidence="1" type="primary">clpX</name>
    <name type="ordered locus">XAC1079</name>
</gene>
<comment type="function">
    <text evidence="1">ATP-dependent specificity component of the Clp protease. It directs the protease to specific substrates. Can perform chaperone functions in the absence of ClpP.</text>
</comment>
<comment type="subunit">
    <text evidence="1">Component of the ClpX-ClpP complex. Forms a hexameric ring that, in the presence of ATP, binds to fourteen ClpP subunits assembled into a disk-like structure with a central cavity, resembling the structure of eukaryotic proteasomes.</text>
</comment>
<comment type="similarity">
    <text evidence="1">Belongs to the ClpX chaperone family.</text>
</comment>
<protein>
    <recommendedName>
        <fullName evidence="1">ATP-dependent Clp protease ATP-binding subunit ClpX</fullName>
    </recommendedName>
</protein>
<evidence type="ECO:0000255" key="1">
    <source>
        <dbReference type="HAMAP-Rule" id="MF_00175"/>
    </source>
</evidence>
<evidence type="ECO:0000255" key="2">
    <source>
        <dbReference type="PROSITE-ProRule" id="PRU01250"/>
    </source>
</evidence>
<accession>Q8PNI4</accession>
<name>CLPX_XANAC</name>
<organism>
    <name type="scientific">Xanthomonas axonopodis pv. citri (strain 306)</name>
    <dbReference type="NCBI Taxonomy" id="190486"/>
    <lineage>
        <taxon>Bacteria</taxon>
        <taxon>Pseudomonadati</taxon>
        <taxon>Pseudomonadota</taxon>
        <taxon>Gammaproteobacteria</taxon>
        <taxon>Lysobacterales</taxon>
        <taxon>Lysobacteraceae</taxon>
        <taxon>Xanthomonas</taxon>
    </lineage>
</organism>
<sequence length="428" mass="47135">MSEDRQGRSGDSNKILYCSFCGKSQHEVRKLIAGPSVFICDECVELCNDIIREELEEKAQSARSSLPKPREILEVLDQYVIGQLRAKRTLAVAVYNHYKRIESRSKNDDVELAKSNILLVGPTGSGKTLLAETLARLLNVPFTIADATTLTEAGYVGEDVENIIQKLLQKCDYDVEKAQQGIVYIDEIDKISRKSENPSITRDVSGEGVQQALLKLIEGTVASVPPQGGRKHPQQEFLQVDTKNILFICGGAFAGLDKVIQQRSNDAGGIGFGAKVKSSERKQEVGKILAEVEPEDLIKFGLIPEFVGRLPVVATLEELDEPALIKILTEPKNAITKQFKKLFDMEGVELEFRPDALSAIAKKALKRKTGARGLRTIVESVLLDTMYELPSQENVSKVVVDESVIEHKSEPYLIYQAQPAPAKAASGD</sequence>
<dbReference type="EMBL" id="AE008923">
    <property type="protein sequence ID" value="AAM35957.1"/>
    <property type="molecule type" value="Genomic_DNA"/>
</dbReference>
<dbReference type="RefSeq" id="WP_003483788.1">
    <property type="nucleotide sequence ID" value="NC_003919.1"/>
</dbReference>
<dbReference type="SMR" id="Q8PNI4"/>
<dbReference type="GeneID" id="97509418"/>
<dbReference type="KEGG" id="xac:XAC1079"/>
<dbReference type="eggNOG" id="COG1219">
    <property type="taxonomic scope" value="Bacteria"/>
</dbReference>
<dbReference type="HOGENOM" id="CLU_014218_8_2_6"/>
<dbReference type="Proteomes" id="UP000000576">
    <property type="component" value="Chromosome"/>
</dbReference>
<dbReference type="GO" id="GO:0009376">
    <property type="term" value="C:HslUV protease complex"/>
    <property type="evidence" value="ECO:0007669"/>
    <property type="project" value="TreeGrafter"/>
</dbReference>
<dbReference type="GO" id="GO:0005524">
    <property type="term" value="F:ATP binding"/>
    <property type="evidence" value="ECO:0007669"/>
    <property type="project" value="UniProtKB-UniRule"/>
</dbReference>
<dbReference type="GO" id="GO:0016887">
    <property type="term" value="F:ATP hydrolysis activity"/>
    <property type="evidence" value="ECO:0007669"/>
    <property type="project" value="InterPro"/>
</dbReference>
<dbReference type="GO" id="GO:0140662">
    <property type="term" value="F:ATP-dependent protein folding chaperone"/>
    <property type="evidence" value="ECO:0007669"/>
    <property type="project" value="InterPro"/>
</dbReference>
<dbReference type="GO" id="GO:0046983">
    <property type="term" value="F:protein dimerization activity"/>
    <property type="evidence" value="ECO:0007669"/>
    <property type="project" value="InterPro"/>
</dbReference>
<dbReference type="GO" id="GO:0051082">
    <property type="term" value="F:unfolded protein binding"/>
    <property type="evidence" value="ECO:0007669"/>
    <property type="project" value="UniProtKB-UniRule"/>
</dbReference>
<dbReference type="GO" id="GO:0008270">
    <property type="term" value="F:zinc ion binding"/>
    <property type="evidence" value="ECO:0007669"/>
    <property type="project" value="InterPro"/>
</dbReference>
<dbReference type="GO" id="GO:0051301">
    <property type="term" value="P:cell division"/>
    <property type="evidence" value="ECO:0007669"/>
    <property type="project" value="TreeGrafter"/>
</dbReference>
<dbReference type="GO" id="GO:0051603">
    <property type="term" value="P:proteolysis involved in protein catabolic process"/>
    <property type="evidence" value="ECO:0007669"/>
    <property type="project" value="TreeGrafter"/>
</dbReference>
<dbReference type="CDD" id="cd19497">
    <property type="entry name" value="RecA-like_ClpX"/>
    <property type="match status" value="1"/>
</dbReference>
<dbReference type="FunFam" id="1.10.8.60:FF:000002">
    <property type="entry name" value="ATP-dependent Clp protease ATP-binding subunit ClpX"/>
    <property type="match status" value="1"/>
</dbReference>
<dbReference type="FunFam" id="3.40.50.300:FF:000005">
    <property type="entry name" value="ATP-dependent Clp protease ATP-binding subunit ClpX"/>
    <property type="match status" value="1"/>
</dbReference>
<dbReference type="Gene3D" id="1.10.8.60">
    <property type="match status" value="1"/>
</dbReference>
<dbReference type="Gene3D" id="6.20.220.10">
    <property type="entry name" value="ClpX chaperone, C4-type zinc finger domain"/>
    <property type="match status" value="1"/>
</dbReference>
<dbReference type="Gene3D" id="3.40.50.300">
    <property type="entry name" value="P-loop containing nucleotide triphosphate hydrolases"/>
    <property type="match status" value="1"/>
</dbReference>
<dbReference type="HAMAP" id="MF_00175">
    <property type="entry name" value="ClpX"/>
    <property type="match status" value="1"/>
</dbReference>
<dbReference type="InterPro" id="IPR003593">
    <property type="entry name" value="AAA+_ATPase"/>
</dbReference>
<dbReference type="InterPro" id="IPR050052">
    <property type="entry name" value="ATP-dep_Clp_protease_ClpX"/>
</dbReference>
<dbReference type="InterPro" id="IPR003959">
    <property type="entry name" value="ATPase_AAA_core"/>
</dbReference>
<dbReference type="InterPro" id="IPR019489">
    <property type="entry name" value="Clp_ATPase_C"/>
</dbReference>
<dbReference type="InterPro" id="IPR004487">
    <property type="entry name" value="Clp_protease_ATP-bd_su_ClpX"/>
</dbReference>
<dbReference type="InterPro" id="IPR046425">
    <property type="entry name" value="ClpX_bact"/>
</dbReference>
<dbReference type="InterPro" id="IPR027417">
    <property type="entry name" value="P-loop_NTPase"/>
</dbReference>
<dbReference type="InterPro" id="IPR010603">
    <property type="entry name" value="Znf_CppX_C4"/>
</dbReference>
<dbReference type="InterPro" id="IPR038366">
    <property type="entry name" value="Znf_CppX_C4_sf"/>
</dbReference>
<dbReference type="NCBIfam" id="TIGR00382">
    <property type="entry name" value="clpX"/>
    <property type="match status" value="1"/>
</dbReference>
<dbReference type="NCBIfam" id="NF003745">
    <property type="entry name" value="PRK05342.1"/>
    <property type="match status" value="1"/>
</dbReference>
<dbReference type="PANTHER" id="PTHR48102:SF7">
    <property type="entry name" value="ATP-DEPENDENT CLP PROTEASE ATP-BINDING SUBUNIT CLPX-LIKE, MITOCHONDRIAL"/>
    <property type="match status" value="1"/>
</dbReference>
<dbReference type="PANTHER" id="PTHR48102">
    <property type="entry name" value="ATP-DEPENDENT CLP PROTEASE ATP-BINDING SUBUNIT CLPX-LIKE, MITOCHONDRIAL-RELATED"/>
    <property type="match status" value="1"/>
</dbReference>
<dbReference type="Pfam" id="PF07724">
    <property type="entry name" value="AAA_2"/>
    <property type="match status" value="1"/>
</dbReference>
<dbReference type="Pfam" id="PF10431">
    <property type="entry name" value="ClpB_D2-small"/>
    <property type="match status" value="1"/>
</dbReference>
<dbReference type="Pfam" id="PF06689">
    <property type="entry name" value="zf-C4_ClpX"/>
    <property type="match status" value="1"/>
</dbReference>
<dbReference type="SMART" id="SM00382">
    <property type="entry name" value="AAA"/>
    <property type="match status" value="1"/>
</dbReference>
<dbReference type="SMART" id="SM01086">
    <property type="entry name" value="ClpB_D2-small"/>
    <property type="match status" value="1"/>
</dbReference>
<dbReference type="SMART" id="SM00994">
    <property type="entry name" value="zf-C4_ClpX"/>
    <property type="match status" value="1"/>
</dbReference>
<dbReference type="SUPFAM" id="SSF57716">
    <property type="entry name" value="Glucocorticoid receptor-like (DNA-binding domain)"/>
    <property type="match status" value="1"/>
</dbReference>
<dbReference type="SUPFAM" id="SSF52540">
    <property type="entry name" value="P-loop containing nucleoside triphosphate hydrolases"/>
    <property type="match status" value="1"/>
</dbReference>
<dbReference type="PROSITE" id="PS51902">
    <property type="entry name" value="CLPX_ZB"/>
    <property type="match status" value="1"/>
</dbReference>
<feature type="chain" id="PRO_0000160459" description="ATP-dependent Clp protease ATP-binding subunit ClpX">
    <location>
        <begin position="1"/>
        <end position="428"/>
    </location>
</feature>
<feature type="domain" description="ClpX-type ZB" evidence="2">
    <location>
        <begin position="6"/>
        <end position="59"/>
    </location>
</feature>
<feature type="binding site" evidence="2">
    <location>
        <position position="18"/>
    </location>
    <ligand>
        <name>Zn(2+)</name>
        <dbReference type="ChEBI" id="CHEBI:29105"/>
    </ligand>
</feature>
<feature type="binding site" evidence="2">
    <location>
        <position position="21"/>
    </location>
    <ligand>
        <name>Zn(2+)</name>
        <dbReference type="ChEBI" id="CHEBI:29105"/>
    </ligand>
</feature>
<feature type="binding site" evidence="2">
    <location>
        <position position="40"/>
    </location>
    <ligand>
        <name>Zn(2+)</name>
        <dbReference type="ChEBI" id="CHEBI:29105"/>
    </ligand>
</feature>
<feature type="binding site" evidence="2">
    <location>
        <position position="43"/>
    </location>
    <ligand>
        <name>Zn(2+)</name>
        <dbReference type="ChEBI" id="CHEBI:29105"/>
    </ligand>
</feature>
<feature type="binding site" evidence="1">
    <location>
        <begin position="122"/>
        <end position="129"/>
    </location>
    <ligand>
        <name>ATP</name>
        <dbReference type="ChEBI" id="CHEBI:30616"/>
    </ligand>
</feature>
<reference key="1">
    <citation type="journal article" date="2002" name="Nature">
        <title>Comparison of the genomes of two Xanthomonas pathogens with differing host specificities.</title>
        <authorList>
            <person name="da Silva A.C.R."/>
            <person name="Ferro J.A."/>
            <person name="Reinach F.C."/>
            <person name="Farah C.S."/>
            <person name="Furlan L.R."/>
            <person name="Quaggio R.B."/>
            <person name="Monteiro-Vitorello C.B."/>
            <person name="Van Sluys M.A."/>
            <person name="Almeida N.F. Jr."/>
            <person name="Alves L.M.C."/>
            <person name="do Amaral A.M."/>
            <person name="Bertolini M.C."/>
            <person name="Camargo L.E.A."/>
            <person name="Camarotte G."/>
            <person name="Cannavan F."/>
            <person name="Cardozo J."/>
            <person name="Chambergo F."/>
            <person name="Ciapina L.P."/>
            <person name="Cicarelli R.M.B."/>
            <person name="Coutinho L.L."/>
            <person name="Cursino-Santos J.R."/>
            <person name="El-Dorry H."/>
            <person name="Faria J.B."/>
            <person name="Ferreira A.J.S."/>
            <person name="Ferreira R.C.C."/>
            <person name="Ferro M.I.T."/>
            <person name="Formighieri E.F."/>
            <person name="Franco M.C."/>
            <person name="Greggio C.C."/>
            <person name="Gruber A."/>
            <person name="Katsuyama A.M."/>
            <person name="Kishi L.T."/>
            <person name="Leite R.P."/>
            <person name="Lemos E.G.M."/>
            <person name="Lemos M.V.F."/>
            <person name="Locali E.C."/>
            <person name="Machado M.A."/>
            <person name="Madeira A.M.B.N."/>
            <person name="Martinez-Rossi N.M."/>
            <person name="Martins E.C."/>
            <person name="Meidanis J."/>
            <person name="Menck C.F.M."/>
            <person name="Miyaki C.Y."/>
            <person name="Moon D.H."/>
            <person name="Moreira L.M."/>
            <person name="Novo M.T.M."/>
            <person name="Okura V.K."/>
            <person name="Oliveira M.C."/>
            <person name="Oliveira V.R."/>
            <person name="Pereira H.A."/>
            <person name="Rossi A."/>
            <person name="Sena J.A.D."/>
            <person name="Silva C."/>
            <person name="de Souza R.F."/>
            <person name="Spinola L.A.F."/>
            <person name="Takita M.A."/>
            <person name="Tamura R.E."/>
            <person name="Teixeira E.C."/>
            <person name="Tezza R.I.D."/>
            <person name="Trindade dos Santos M."/>
            <person name="Truffi D."/>
            <person name="Tsai S.M."/>
            <person name="White F.F."/>
            <person name="Setubal J.C."/>
            <person name="Kitajima J.P."/>
        </authorList>
    </citation>
    <scope>NUCLEOTIDE SEQUENCE [LARGE SCALE GENOMIC DNA]</scope>
    <source>
        <strain>306</strain>
    </source>
</reference>